<reference key="1">
    <citation type="journal article" date="2004" name="Nature">
        <title>Genome evolution in yeasts.</title>
        <authorList>
            <person name="Dujon B."/>
            <person name="Sherman D."/>
            <person name="Fischer G."/>
            <person name="Durrens P."/>
            <person name="Casaregola S."/>
            <person name="Lafontaine I."/>
            <person name="de Montigny J."/>
            <person name="Marck C."/>
            <person name="Neuveglise C."/>
            <person name="Talla E."/>
            <person name="Goffard N."/>
            <person name="Frangeul L."/>
            <person name="Aigle M."/>
            <person name="Anthouard V."/>
            <person name="Babour A."/>
            <person name="Barbe V."/>
            <person name="Barnay S."/>
            <person name="Blanchin S."/>
            <person name="Beckerich J.-M."/>
            <person name="Beyne E."/>
            <person name="Bleykasten C."/>
            <person name="Boisrame A."/>
            <person name="Boyer J."/>
            <person name="Cattolico L."/>
            <person name="Confanioleri F."/>
            <person name="de Daruvar A."/>
            <person name="Despons L."/>
            <person name="Fabre E."/>
            <person name="Fairhead C."/>
            <person name="Ferry-Dumazet H."/>
            <person name="Groppi A."/>
            <person name="Hantraye F."/>
            <person name="Hennequin C."/>
            <person name="Jauniaux N."/>
            <person name="Joyet P."/>
            <person name="Kachouri R."/>
            <person name="Kerrest A."/>
            <person name="Koszul R."/>
            <person name="Lemaire M."/>
            <person name="Lesur I."/>
            <person name="Ma L."/>
            <person name="Muller H."/>
            <person name="Nicaud J.-M."/>
            <person name="Nikolski M."/>
            <person name="Oztas S."/>
            <person name="Ozier-Kalogeropoulos O."/>
            <person name="Pellenz S."/>
            <person name="Potier S."/>
            <person name="Richard G.-F."/>
            <person name="Straub M.-L."/>
            <person name="Suleau A."/>
            <person name="Swennen D."/>
            <person name="Tekaia F."/>
            <person name="Wesolowski-Louvel M."/>
            <person name="Westhof E."/>
            <person name="Wirth B."/>
            <person name="Zeniou-Meyer M."/>
            <person name="Zivanovic Y."/>
            <person name="Bolotin-Fukuhara M."/>
            <person name="Thierry A."/>
            <person name="Bouchier C."/>
            <person name="Caudron B."/>
            <person name="Scarpelli C."/>
            <person name="Gaillardin C."/>
            <person name="Weissenbach J."/>
            <person name="Wincker P."/>
            <person name="Souciet J.-L."/>
        </authorList>
    </citation>
    <scope>NUCLEOTIDE SEQUENCE [LARGE SCALE GENOMIC DNA]</scope>
    <source>
        <strain>ATCC 36239 / CBS 767 / BCRC 21394 / JCM 1990 / NBRC 0083 / IGC 2968</strain>
    </source>
</reference>
<dbReference type="EC" id="1.14.11.27" evidence="2"/>
<dbReference type="EMBL" id="CR382134">
    <property type="protein sequence ID" value="CAG85063.2"/>
    <property type="molecule type" value="Genomic_DNA"/>
</dbReference>
<dbReference type="RefSeq" id="XP_457075.2">
    <property type="nucleotide sequence ID" value="XM_457075.1"/>
</dbReference>
<dbReference type="SMR" id="Q6BXJ4"/>
<dbReference type="FunCoup" id="Q6BXJ4">
    <property type="interactions" value="15"/>
</dbReference>
<dbReference type="STRING" id="284592.Q6BXJ4"/>
<dbReference type="GeneID" id="2913011"/>
<dbReference type="KEGG" id="dha:DEHA2B02464g"/>
<dbReference type="VEuPathDB" id="FungiDB:DEHA2B02464g"/>
<dbReference type="eggNOG" id="KOG1633">
    <property type="taxonomic scope" value="Eukaryota"/>
</dbReference>
<dbReference type="HOGENOM" id="CLU_003540_6_2_1"/>
<dbReference type="InParanoid" id="Q6BXJ4"/>
<dbReference type="OMA" id="SVYYTVC"/>
<dbReference type="OrthoDB" id="5876800at2759"/>
<dbReference type="Proteomes" id="UP000000599">
    <property type="component" value="Chromosome B"/>
</dbReference>
<dbReference type="GO" id="GO:0005634">
    <property type="term" value="C:nucleus"/>
    <property type="evidence" value="ECO:0007669"/>
    <property type="project" value="UniProtKB-SubCell"/>
</dbReference>
<dbReference type="GO" id="GO:0140680">
    <property type="term" value="F:histone H3K36me/H3K36me2 demethylase activity"/>
    <property type="evidence" value="ECO:0007669"/>
    <property type="project" value="UniProtKB-EC"/>
</dbReference>
<dbReference type="GO" id="GO:0008270">
    <property type="term" value="F:zinc ion binding"/>
    <property type="evidence" value="ECO:0007669"/>
    <property type="project" value="UniProtKB-KW"/>
</dbReference>
<dbReference type="CDD" id="cd15517">
    <property type="entry name" value="PHD_TCF19_like"/>
    <property type="match status" value="1"/>
</dbReference>
<dbReference type="Gene3D" id="2.60.120.650">
    <property type="entry name" value="Cupin"/>
    <property type="match status" value="1"/>
</dbReference>
<dbReference type="InterPro" id="IPR041667">
    <property type="entry name" value="Cupin_8"/>
</dbReference>
<dbReference type="InterPro" id="IPR041070">
    <property type="entry name" value="JHD"/>
</dbReference>
<dbReference type="InterPro" id="IPR050690">
    <property type="entry name" value="JHDM1_Histone_Demethylase"/>
</dbReference>
<dbReference type="InterPro" id="IPR003347">
    <property type="entry name" value="JmjC_dom"/>
</dbReference>
<dbReference type="InterPro" id="IPR019786">
    <property type="entry name" value="Zinc_finger_PHD-type_CS"/>
</dbReference>
<dbReference type="InterPro" id="IPR011011">
    <property type="entry name" value="Znf_FYVE_PHD"/>
</dbReference>
<dbReference type="InterPro" id="IPR001965">
    <property type="entry name" value="Znf_PHD"/>
</dbReference>
<dbReference type="InterPro" id="IPR019787">
    <property type="entry name" value="Znf_PHD-finger"/>
</dbReference>
<dbReference type="PANTHER" id="PTHR23123">
    <property type="entry name" value="PHD/F-BOX CONTAINING PROTEIN"/>
    <property type="match status" value="1"/>
</dbReference>
<dbReference type="Pfam" id="PF13621">
    <property type="entry name" value="Cupin_8"/>
    <property type="match status" value="1"/>
</dbReference>
<dbReference type="Pfam" id="PF17811">
    <property type="entry name" value="JHD"/>
    <property type="match status" value="1"/>
</dbReference>
<dbReference type="Pfam" id="PF00628">
    <property type="entry name" value="PHD"/>
    <property type="match status" value="1"/>
</dbReference>
<dbReference type="SMART" id="SM00558">
    <property type="entry name" value="JmjC"/>
    <property type="match status" value="1"/>
</dbReference>
<dbReference type="SMART" id="SM00249">
    <property type="entry name" value="PHD"/>
    <property type="match status" value="1"/>
</dbReference>
<dbReference type="SUPFAM" id="SSF51197">
    <property type="entry name" value="Clavaminate synthase-like"/>
    <property type="match status" value="1"/>
</dbReference>
<dbReference type="SUPFAM" id="SSF57903">
    <property type="entry name" value="FYVE/PHD zinc finger"/>
    <property type="match status" value="1"/>
</dbReference>
<dbReference type="PROSITE" id="PS51184">
    <property type="entry name" value="JMJC"/>
    <property type="match status" value="1"/>
</dbReference>
<dbReference type="PROSITE" id="PS01359">
    <property type="entry name" value="ZF_PHD_1"/>
    <property type="match status" value="1"/>
</dbReference>
<dbReference type="PROSITE" id="PS50016">
    <property type="entry name" value="ZF_PHD_2"/>
    <property type="match status" value="1"/>
</dbReference>
<sequence length="514" mass="58685">MPDIDTCPICVESPLEDSTTFNNIAWLQCDICNQWFHASCLKIPKIEVNNLHSYHCEGCSKSHGPSIPKRKSKRSKVQIDYVALNDGDVFAVDKSSHPHVDKFLSFEVNANEIDDKINPYIDFRKDITADYALDTRLTRPVLIPRADLDIVDMKLPIEGKEITIDYIANEVGDDTPLDVMDVLTQQGVNPGWNLGKWRDYYNTDELSRDRIRNVISLEISDVDSFGKSFRRPRIVRDMDLVDKVWNDKSPRPKVTKYCLMSVTGSFTDFHIDFSGTSVYYTVCSGSKTFLMYPPTEQNLDIYTSWCLQPDQNYMWFGDFTKAFKGKGCTPSGGFKVTLSPGDLFIIPSGWIHAVFTPEDSLVIGGNFLTLMDLSMHLRIYEIEKVTRVPAKFRFPMFNRVLWLTSWYYYNNKSQFLKDLGQDAHIKNEAHIKSEAHSRGEVHTKTETHAVKDEPQPDQSVQYKTLSCLVSHLQSHYESSKINKVARNTIPAGLIGKDIPGYLAKLQSWLDELSP</sequence>
<accession>Q6BXJ4</accession>
<gene>
    <name type="primary">JHD1</name>
    <name type="ordered locus">DEHA2B02464g</name>
</gene>
<proteinExistence type="inferred from homology"/>
<evidence type="ECO:0000250" key="1"/>
<evidence type="ECO:0000250" key="2">
    <source>
        <dbReference type="UniProtKB" id="P40034"/>
    </source>
</evidence>
<evidence type="ECO:0000255" key="3">
    <source>
        <dbReference type="PROSITE-ProRule" id="PRU00146"/>
    </source>
</evidence>
<evidence type="ECO:0000255" key="4">
    <source>
        <dbReference type="PROSITE-ProRule" id="PRU00538"/>
    </source>
</evidence>
<evidence type="ECO:0000256" key="5">
    <source>
        <dbReference type="SAM" id="MobiDB-lite"/>
    </source>
</evidence>
<evidence type="ECO:0000305" key="6"/>
<keyword id="KW-0156">Chromatin regulator</keyword>
<keyword id="KW-0223">Dioxygenase</keyword>
<keyword id="KW-0408">Iron</keyword>
<keyword id="KW-0479">Metal-binding</keyword>
<keyword id="KW-0539">Nucleus</keyword>
<keyword id="KW-0560">Oxidoreductase</keyword>
<keyword id="KW-1185">Reference proteome</keyword>
<keyword id="KW-0804">Transcription</keyword>
<keyword id="KW-0805">Transcription regulation</keyword>
<keyword id="KW-0862">Zinc</keyword>
<keyword id="KW-0863">Zinc-finger</keyword>
<comment type="function">
    <text evidence="2">Histone demethylase that specifically demethylates 'Lys-36' of histone H3, thereby playing a central role in histone code.</text>
</comment>
<comment type="catalytic activity">
    <reaction evidence="2">
        <text>N(6),N(6)-dimethyl-L-lysyl(36)-[histone H3] + 2 2-oxoglutarate + 2 O2 = L-lysyl(36)-[histone H3] + 2 formaldehyde + 2 succinate + 2 CO2</text>
        <dbReference type="Rhea" id="RHEA:42032"/>
        <dbReference type="Rhea" id="RHEA-COMP:9785"/>
        <dbReference type="Rhea" id="RHEA-COMP:9787"/>
        <dbReference type="ChEBI" id="CHEBI:15379"/>
        <dbReference type="ChEBI" id="CHEBI:16526"/>
        <dbReference type="ChEBI" id="CHEBI:16810"/>
        <dbReference type="ChEBI" id="CHEBI:16842"/>
        <dbReference type="ChEBI" id="CHEBI:29969"/>
        <dbReference type="ChEBI" id="CHEBI:30031"/>
        <dbReference type="ChEBI" id="CHEBI:61976"/>
        <dbReference type="EC" id="1.14.11.27"/>
    </reaction>
</comment>
<comment type="cofactor">
    <cofactor evidence="1">
        <name>Fe(2+)</name>
        <dbReference type="ChEBI" id="CHEBI:29033"/>
    </cofactor>
    <text evidence="1">Binds 1 Fe(2+) ion per subunit.</text>
</comment>
<comment type="subcellular location">
    <subcellularLocation>
        <location evidence="1">Nucleus</location>
    </subcellularLocation>
</comment>
<comment type="domain">
    <text evidence="1">The JmjC domain mediates the demethylation activity.</text>
</comment>
<comment type="similarity">
    <text evidence="6">Belongs to the JHDM1 histone demethylase family.</text>
</comment>
<feature type="chain" id="PRO_0000226796" description="JmjC domain-containing histone demethylation protein 1">
    <location>
        <begin position="1"/>
        <end position="514"/>
    </location>
</feature>
<feature type="domain" description="JmjC" evidence="4">
    <location>
        <begin position="220"/>
        <end position="384"/>
    </location>
</feature>
<feature type="zinc finger region" description="PHD-type" evidence="3">
    <location>
        <begin position="4"/>
        <end position="62"/>
    </location>
</feature>
<feature type="region of interest" description="Disordered" evidence="5">
    <location>
        <begin position="432"/>
        <end position="456"/>
    </location>
</feature>
<feature type="compositionally biased region" description="Basic and acidic residues" evidence="5">
    <location>
        <begin position="432"/>
        <end position="454"/>
    </location>
</feature>
<feature type="binding site" evidence="1">
    <location>
        <position position="267"/>
    </location>
    <ligand>
        <name>substrate</name>
    </ligand>
</feature>
<feature type="binding site" evidence="4">
    <location>
        <position position="270"/>
    </location>
    <ligand>
        <name>Fe cation</name>
        <dbReference type="ChEBI" id="CHEBI:24875"/>
        <note>catalytic</note>
    </ligand>
</feature>
<feature type="binding site" evidence="4">
    <location>
        <position position="272"/>
    </location>
    <ligand>
        <name>Fe cation</name>
        <dbReference type="ChEBI" id="CHEBI:24875"/>
        <note>catalytic</note>
    </ligand>
</feature>
<feature type="binding site" evidence="1">
    <location>
        <position position="287"/>
    </location>
    <ligand>
        <name>substrate</name>
    </ligand>
</feature>
<feature type="binding site" evidence="4">
    <location>
        <position position="352"/>
    </location>
    <ligand>
        <name>Fe cation</name>
        <dbReference type="ChEBI" id="CHEBI:24875"/>
        <note>catalytic</note>
    </ligand>
</feature>
<protein>
    <recommendedName>
        <fullName>JmjC domain-containing histone demethylation protein 1</fullName>
        <ecNumber evidence="2">1.14.11.27</ecNumber>
    </recommendedName>
    <alternativeName>
        <fullName>[Histone-H3]-lysine-36 demethylase 1</fullName>
    </alternativeName>
</protein>
<name>JHD1_DEBHA</name>
<organism>
    <name type="scientific">Debaryomyces hansenii (strain ATCC 36239 / CBS 767 / BCRC 21394 / JCM 1990 / NBRC 0083 / IGC 2968)</name>
    <name type="common">Yeast</name>
    <name type="synonym">Torulaspora hansenii</name>
    <dbReference type="NCBI Taxonomy" id="284592"/>
    <lineage>
        <taxon>Eukaryota</taxon>
        <taxon>Fungi</taxon>
        <taxon>Dikarya</taxon>
        <taxon>Ascomycota</taxon>
        <taxon>Saccharomycotina</taxon>
        <taxon>Pichiomycetes</taxon>
        <taxon>Debaryomycetaceae</taxon>
        <taxon>Debaryomyces</taxon>
    </lineage>
</organism>